<accession>P56354</accession>
<keyword id="KW-0150">Chloroplast</keyword>
<keyword id="KW-0934">Plastid</keyword>
<keyword id="KW-0687">Ribonucleoprotein</keyword>
<keyword id="KW-0689">Ribosomal protein</keyword>
<keyword id="KW-0694">RNA-binding</keyword>
<keyword id="KW-0699">rRNA-binding</keyword>
<comment type="function">
    <text evidence="1">With S4 and S5 plays an important role in translational accuracy. Located at the interface of the 30S and 50S subunits (By similarity).</text>
</comment>
<comment type="subunit">
    <text evidence="1">Part of the 30S ribosomal subunit.</text>
</comment>
<comment type="subcellular location">
    <subcellularLocation>
        <location>Plastid</location>
        <location>Chloroplast</location>
    </subcellularLocation>
</comment>
<comment type="similarity">
    <text evidence="2">Belongs to the universal ribosomal protein uS12 family.</text>
</comment>
<sequence>MPTIQQLVRSARTRLSKKTKSPALKSCPQRRGVCTRVYTTTPKKPNSALRKVARVRLTSGFEVTAYIPGIGHNLQEHSVVLVRGGRVKDLPGVRYHIVRGTLDSAGVKDRSQSRSKYGVKRPK</sequence>
<proteinExistence type="inferred from homology"/>
<gene>
    <name type="primary">rps12</name>
</gene>
<dbReference type="EMBL" id="AB001684">
    <property type="protein sequence ID" value="BAA57884.1"/>
    <property type="molecule type" value="Genomic_DNA"/>
</dbReference>
<dbReference type="PIR" id="T07237">
    <property type="entry name" value="T07237"/>
</dbReference>
<dbReference type="RefSeq" id="NP_045809.1">
    <property type="nucleotide sequence ID" value="NC_001865.1"/>
</dbReference>
<dbReference type="SMR" id="P56354"/>
<dbReference type="GeneID" id="809134"/>
<dbReference type="OrthoDB" id="414309at2759"/>
<dbReference type="GO" id="GO:0009507">
    <property type="term" value="C:chloroplast"/>
    <property type="evidence" value="ECO:0007669"/>
    <property type="project" value="UniProtKB-SubCell"/>
</dbReference>
<dbReference type="GO" id="GO:0015935">
    <property type="term" value="C:small ribosomal subunit"/>
    <property type="evidence" value="ECO:0007669"/>
    <property type="project" value="InterPro"/>
</dbReference>
<dbReference type="GO" id="GO:0019843">
    <property type="term" value="F:rRNA binding"/>
    <property type="evidence" value="ECO:0007669"/>
    <property type="project" value="UniProtKB-UniRule"/>
</dbReference>
<dbReference type="GO" id="GO:0003735">
    <property type="term" value="F:structural constituent of ribosome"/>
    <property type="evidence" value="ECO:0007669"/>
    <property type="project" value="InterPro"/>
</dbReference>
<dbReference type="GO" id="GO:0006412">
    <property type="term" value="P:translation"/>
    <property type="evidence" value="ECO:0007669"/>
    <property type="project" value="UniProtKB-UniRule"/>
</dbReference>
<dbReference type="CDD" id="cd03368">
    <property type="entry name" value="Ribosomal_S12"/>
    <property type="match status" value="1"/>
</dbReference>
<dbReference type="FunFam" id="2.40.50.140:FF:000001">
    <property type="entry name" value="30S ribosomal protein S12"/>
    <property type="match status" value="1"/>
</dbReference>
<dbReference type="Gene3D" id="2.40.50.140">
    <property type="entry name" value="Nucleic acid-binding proteins"/>
    <property type="match status" value="1"/>
</dbReference>
<dbReference type="HAMAP" id="MF_00403_B">
    <property type="entry name" value="Ribosomal_uS12_B"/>
    <property type="match status" value="1"/>
</dbReference>
<dbReference type="InterPro" id="IPR012340">
    <property type="entry name" value="NA-bd_OB-fold"/>
</dbReference>
<dbReference type="InterPro" id="IPR006032">
    <property type="entry name" value="Ribosomal_uS12"/>
</dbReference>
<dbReference type="InterPro" id="IPR005679">
    <property type="entry name" value="Ribosomal_uS12_bac"/>
</dbReference>
<dbReference type="NCBIfam" id="TIGR00981">
    <property type="entry name" value="rpsL_bact"/>
    <property type="match status" value="1"/>
</dbReference>
<dbReference type="PANTHER" id="PTHR11652">
    <property type="entry name" value="30S RIBOSOMAL PROTEIN S12 FAMILY MEMBER"/>
    <property type="match status" value="1"/>
</dbReference>
<dbReference type="Pfam" id="PF00164">
    <property type="entry name" value="Ribosom_S12_S23"/>
    <property type="match status" value="1"/>
</dbReference>
<dbReference type="PIRSF" id="PIRSF002133">
    <property type="entry name" value="Ribosomal_S12/S23"/>
    <property type="match status" value="1"/>
</dbReference>
<dbReference type="PRINTS" id="PR01034">
    <property type="entry name" value="RIBOSOMALS12"/>
</dbReference>
<dbReference type="SUPFAM" id="SSF50249">
    <property type="entry name" value="Nucleic acid-binding proteins"/>
    <property type="match status" value="1"/>
</dbReference>
<dbReference type="PROSITE" id="PS00055">
    <property type="entry name" value="RIBOSOMAL_S12"/>
    <property type="match status" value="1"/>
</dbReference>
<name>RR12_CHLVU</name>
<protein>
    <recommendedName>
        <fullName evidence="2">Small ribosomal subunit protein uS12c</fullName>
    </recommendedName>
    <alternativeName>
        <fullName>30S ribosomal protein S12, chloroplastic</fullName>
    </alternativeName>
</protein>
<geneLocation type="chloroplast"/>
<evidence type="ECO:0000250" key="1"/>
<evidence type="ECO:0000305" key="2"/>
<reference key="1">
    <citation type="journal article" date="1997" name="Proc. Natl. Acad. Sci. U.S.A.">
        <title>Complete nucleotide sequence of the chloroplast genome from the green alga Chlorella vulgaris: the existence of genes possibly involved in chloroplast division.</title>
        <authorList>
            <person name="Wakasugi T."/>
            <person name="Nagai T."/>
            <person name="Kapoor M."/>
            <person name="Sugita M."/>
            <person name="Ito M."/>
            <person name="Ito S."/>
            <person name="Tsudzuki J."/>
            <person name="Nakashima K."/>
            <person name="Tsudzuki T."/>
            <person name="Suzuki Y."/>
            <person name="Hamada A."/>
            <person name="Ohta T."/>
            <person name="Inamura A."/>
            <person name="Yoshinaga K."/>
            <person name="Sugiura M."/>
        </authorList>
    </citation>
    <scope>NUCLEOTIDE SEQUENCE [LARGE SCALE GENOMIC DNA]</scope>
    <source>
        <strain>IAM C-27 / Tamiya</strain>
    </source>
</reference>
<feature type="chain" id="PRO_0000146397" description="Small ribosomal subunit protein uS12c">
    <location>
        <begin position="1"/>
        <end position="123"/>
    </location>
</feature>
<organism>
    <name type="scientific">Chlorella vulgaris</name>
    <name type="common">Green alga</name>
    <dbReference type="NCBI Taxonomy" id="3077"/>
    <lineage>
        <taxon>Eukaryota</taxon>
        <taxon>Viridiplantae</taxon>
        <taxon>Chlorophyta</taxon>
        <taxon>core chlorophytes</taxon>
        <taxon>Trebouxiophyceae</taxon>
        <taxon>Chlorellales</taxon>
        <taxon>Chlorellaceae</taxon>
        <taxon>Chlorella clade</taxon>
        <taxon>Chlorella</taxon>
    </lineage>
</organism>